<gene>
    <name evidence="1" type="primary">ureF</name>
    <name type="ordered locus">GK1928</name>
    <name type="ORF">GKB15</name>
</gene>
<organism>
    <name type="scientific">Geobacillus kaustophilus (strain HTA426)</name>
    <dbReference type="NCBI Taxonomy" id="235909"/>
    <lineage>
        <taxon>Bacteria</taxon>
        <taxon>Bacillati</taxon>
        <taxon>Bacillota</taxon>
        <taxon>Bacilli</taxon>
        <taxon>Bacillales</taxon>
        <taxon>Anoxybacillaceae</taxon>
        <taxon>Geobacillus</taxon>
        <taxon>Geobacillus thermoleovorans group</taxon>
    </lineage>
</organism>
<keyword id="KW-0143">Chaperone</keyword>
<keyword id="KW-0963">Cytoplasm</keyword>
<keyword id="KW-0996">Nickel insertion</keyword>
<keyword id="KW-1185">Reference proteome</keyword>
<sequence>MTDQQLLWLLQLSDSNFPSGAFSHSFGFETYMYNEQICDAKTFREALVVYIQTQLTYTDGLACRIAYEQLEANSMEGLQRLNETLFALCLAKETREGTRMIGERLWKLCRDIYGVDELDEIVQTTRSIHPAIVFAAVGRKIGAAKQTTVLTYLFASVQTMVQNAVRGIPLGQTDGQKLLVMAQPYLIHAASIIETLDEEELGAAAVGLEIAQMQHERLPVRLFMS</sequence>
<accession>Q75TC3</accession>
<accession>Q5KYM3</accession>
<evidence type="ECO:0000255" key="1">
    <source>
        <dbReference type="HAMAP-Rule" id="MF_01385"/>
    </source>
</evidence>
<protein>
    <recommendedName>
        <fullName evidence="1">Urease accessory protein UreF</fullName>
    </recommendedName>
</protein>
<dbReference type="EMBL" id="AB126619">
    <property type="protein sequence ID" value="BAD18355.1"/>
    <property type="molecule type" value="Genomic_DNA"/>
</dbReference>
<dbReference type="EMBL" id="BA000043">
    <property type="protein sequence ID" value="BAD76213.1"/>
    <property type="molecule type" value="Genomic_DNA"/>
</dbReference>
<dbReference type="RefSeq" id="WP_011231414.1">
    <property type="nucleotide sequence ID" value="NC_006510.1"/>
</dbReference>
<dbReference type="SMR" id="Q75TC3"/>
<dbReference type="STRING" id="235909.GK1928"/>
<dbReference type="KEGG" id="gka:GK1928"/>
<dbReference type="PATRIC" id="fig|235909.7.peg.2069"/>
<dbReference type="eggNOG" id="COG0830">
    <property type="taxonomic scope" value="Bacteria"/>
</dbReference>
<dbReference type="HOGENOM" id="CLU_049215_4_2_9"/>
<dbReference type="Proteomes" id="UP000001172">
    <property type="component" value="Chromosome"/>
</dbReference>
<dbReference type="GO" id="GO:0005737">
    <property type="term" value="C:cytoplasm"/>
    <property type="evidence" value="ECO:0007669"/>
    <property type="project" value="UniProtKB-SubCell"/>
</dbReference>
<dbReference type="GO" id="GO:0016151">
    <property type="term" value="F:nickel cation binding"/>
    <property type="evidence" value="ECO:0007669"/>
    <property type="project" value="UniProtKB-UniRule"/>
</dbReference>
<dbReference type="Gene3D" id="1.10.4190.10">
    <property type="entry name" value="Urease accessory protein UreF"/>
    <property type="match status" value="1"/>
</dbReference>
<dbReference type="HAMAP" id="MF_01385">
    <property type="entry name" value="UreF"/>
    <property type="match status" value="1"/>
</dbReference>
<dbReference type="InterPro" id="IPR002639">
    <property type="entry name" value="UreF"/>
</dbReference>
<dbReference type="InterPro" id="IPR038277">
    <property type="entry name" value="UreF_sf"/>
</dbReference>
<dbReference type="PANTHER" id="PTHR33620">
    <property type="entry name" value="UREASE ACCESSORY PROTEIN F"/>
    <property type="match status" value="1"/>
</dbReference>
<dbReference type="PANTHER" id="PTHR33620:SF1">
    <property type="entry name" value="UREASE ACCESSORY PROTEIN F"/>
    <property type="match status" value="1"/>
</dbReference>
<dbReference type="Pfam" id="PF01730">
    <property type="entry name" value="UreF"/>
    <property type="match status" value="1"/>
</dbReference>
<dbReference type="PIRSF" id="PIRSF009467">
    <property type="entry name" value="Ureas_acces_UreF"/>
    <property type="match status" value="1"/>
</dbReference>
<name>UREF_GEOKA</name>
<reference key="1">
    <citation type="journal article" date="2004" name="Nucleic Acids Res.">
        <title>Thermoadaptation trait revealed by the genome sequence of thermophilic Geobacillus kaustophilus.</title>
        <authorList>
            <person name="Takami H."/>
            <person name="Takaki Y."/>
            <person name="Chee G.-J."/>
            <person name="Nishi S."/>
            <person name="Shimamura S."/>
            <person name="Suzuki H."/>
            <person name="Matsui S."/>
            <person name="Uchiyama I."/>
        </authorList>
    </citation>
    <scope>NUCLEOTIDE SEQUENCE [LARGE SCALE GENOMIC DNA]</scope>
    <source>
        <strain>HTA426</strain>
    </source>
</reference>
<feature type="chain" id="PRO_0000344123" description="Urease accessory protein UreF">
    <location>
        <begin position="1"/>
        <end position="225"/>
    </location>
</feature>
<proteinExistence type="inferred from homology"/>
<comment type="function">
    <text evidence="1">Required for maturation of urease via the functional incorporation of the urease nickel metallocenter.</text>
</comment>
<comment type="subunit">
    <text evidence="1">UreD, UreF and UreG form a complex that acts as a GTP-hydrolysis-dependent molecular chaperone, activating the urease apoprotein by helping to assemble the nickel containing metallocenter of UreC. The UreE protein probably delivers the nickel.</text>
</comment>
<comment type="subcellular location">
    <subcellularLocation>
        <location evidence="1">Cytoplasm</location>
    </subcellularLocation>
</comment>
<comment type="similarity">
    <text evidence="1">Belongs to the UreF family.</text>
</comment>